<feature type="chain" id="PRO_0000059723" description="Ig kappa chain V region 4135">
    <location>
        <begin position="1"/>
        <end position="107" status="greater than"/>
    </location>
</feature>
<feature type="region of interest" description="Framework-1">
    <location>
        <begin position="1"/>
        <end position="24"/>
    </location>
</feature>
<feature type="region of interest" description="Complementarity-determining-1">
    <location>
        <begin position="25"/>
        <end position="35"/>
    </location>
</feature>
<feature type="region of interest" description="Framework-2">
    <location>
        <begin position="36"/>
        <end position="50"/>
    </location>
</feature>
<feature type="region of interest" description="Complementarity-determining-2">
    <location>
        <begin position="51"/>
        <end position="57"/>
    </location>
</feature>
<feature type="region of interest" description="Framework-3">
    <location>
        <begin position="58"/>
        <end position="89"/>
    </location>
</feature>
<feature type="region of interest" description="Complementarity-determining-3">
    <location>
        <begin position="90"/>
        <end position="96"/>
    </location>
</feature>
<feature type="region of interest" description="Framework-4">
    <location>
        <begin position="97"/>
        <end position="106"/>
    </location>
</feature>
<feature type="non-terminal residue">
    <location>
        <position position="107"/>
    </location>
</feature>
<name>KV04_RABIT</name>
<protein>
    <recommendedName>
        <fullName>Ig kappa chain V region 4135</fullName>
    </recommendedName>
</protein>
<accession>P01685</accession>
<organism>
    <name type="scientific">Oryctolagus cuniculus</name>
    <name type="common">Rabbit</name>
    <dbReference type="NCBI Taxonomy" id="9986"/>
    <lineage>
        <taxon>Eukaryota</taxon>
        <taxon>Metazoa</taxon>
        <taxon>Chordata</taxon>
        <taxon>Craniata</taxon>
        <taxon>Vertebrata</taxon>
        <taxon>Euteleostomi</taxon>
        <taxon>Mammalia</taxon>
        <taxon>Eutheria</taxon>
        <taxon>Euarchontoglires</taxon>
        <taxon>Glires</taxon>
        <taxon>Lagomorpha</taxon>
        <taxon>Leporidae</taxon>
        <taxon>Oryctolagus</taxon>
    </lineage>
</organism>
<sequence>ADIVMTQTPASVSEPVGGTVTIKCQTSQSIDDYLSWYQQKPGQPPKGLIYRASTLASGVPSRFRGSGSGTDFTLTISDLECADAATYYCQSTYGVGFGGGTEVVVKG</sequence>
<dbReference type="PIR" id="A01948">
    <property type="entry name" value="K4RB41"/>
</dbReference>
<dbReference type="SMR" id="P01685"/>
<dbReference type="FunCoup" id="P01685">
    <property type="interactions" value="277"/>
</dbReference>
<dbReference type="STRING" id="9986.ENSOCUP00000022313"/>
<dbReference type="InParanoid" id="P01685"/>
<dbReference type="Proteomes" id="UP000001811">
    <property type="component" value="Unplaced"/>
</dbReference>
<dbReference type="GO" id="GO:0019814">
    <property type="term" value="C:immunoglobulin complex"/>
    <property type="evidence" value="ECO:0007669"/>
    <property type="project" value="UniProtKB-KW"/>
</dbReference>
<dbReference type="GO" id="GO:0002250">
    <property type="term" value="P:adaptive immune response"/>
    <property type="evidence" value="ECO:0007669"/>
    <property type="project" value="UniProtKB-KW"/>
</dbReference>
<dbReference type="FunFam" id="2.60.40.10:FF:000350">
    <property type="entry name" value="Immunoglobulin kappa chain variable 18-36"/>
    <property type="match status" value="1"/>
</dbReference>
<dbReference type="Gene3D" id="2.60.40.10">
    <property type="entry name" value="Immunoglobulins"/>
    <property type="match status" value="1"/>
</dbReference>
<dbReference type="InterPro" id="IPR007110">
    <property type="entry name" value="Ig-like_dom"/>
</dbReference>
<dbReference type="InterPro" id="IPR036179">
    <property type="entry name" value="Ig-like_dom_sf"/>
</dbReference>
<dbReference type="InterPro" id="IPR013783">
    <property type="entry name" value="Ig-like_fold"/>
</dbReference>
<dbReference type="InterPro" id="IPR003599">
    <property type="entry name" value="Ig_sub"/>
</dbReference>
<dbReference type="InterPro" id="IPR013106">
    <property type="entry name" value="Ig_V-set"/>
</dbReference>
<dbReference type="InterPro" id="IPR050150">
    <property type="entry name" value="IgV_Light_Chain"/>
</dbReference>
<dbReference type="PANTHER" id="PTHR23267">
    <property type="entry name" value="IMMUNOGLOBULIN LIGHT CHAIN"/>
    <property type="match status" value="1"/>
</dbReference>
<dbReference type="Pfam" id="PF07686">
    <property type="entry name" value="V-set"/>
    <property type="match status" value="1"/>
</dbReference>
<dbReference type="SMART" id="SM00409">
    <property type="entry name" value="IG"/>
    <property type="match status" value="1"/>
</dbReference>
<dbReference type="SMART" id="SM00406">
    <property type="entry name" value="IGv"/>
    <property type="match status" value="1"/>
</dbReference>
<dbReference type="SUPFAM" id="SSF48726">
    <property type="entry name" value="Immunoglobulin"/>
    <property type="match status" value="1"/>
</dbReference>
<dbReference type="PROSITE" id="PS50835">
    <property type="entry name" value="IG_LIKE"/>
    <property type="match status" value="1"/>
</dbReference>
<reference key="1">
    <citation type="journal article" date="1975" name="J. Biol. Chem.">
        <title>Primary structure of the L chain from a rabbit homogeneous antibody to streptococcal carbohydrate. II. Sequence determination of peptides from tryptic and peptic digests.</title>
        <authorList>
            <person name="Chen K.C.S."/>
            <person name="Kindt T.J."/>
            <person name="Krause R.M."/>
        </authorList>
    </citation>
    <scope>PROTEIN SEQUENCE</scope>
</reference>
<comment type="miscellaneous">
    <text>The sequence of the B4-type C region is also given.</text>
</comment>
<comment type="miscellaneous">
    <text>This chain was obtained from antibody to the specific carbohydrate of group C Streptococci and was isolated from the serum of a single rabbit.</text>
</comment>
<proteinExistence type="evidence at protein level"/>
<keyword id="KW-1064">Adaptive immunity</keyword>
<keyword id="KW-0903">Direct protein sequencing</keyword>
<keyword id="KW-0391">Immunity</keyword>
<keyword id="KW-1280">Immunoglobulin</keyword>
<keyword id="KW-1185">Reference proteome</keyword>